<dbReference type="EC" id="2.1.2.13" evidence="1"/>
<dbReference type="EC" id="1.1.1.305" evidence="1"/>
<dbReference type="EMBL" id="CP000094">
    <property type="protein sequence ID" value="ABA74584.1"/>
    <property type="molecule type" value="Genomic_DNA"/>
</dbReference>
<dbReference type="RefSeq" id="WP_011334255.1">
    <property type="nucleotide sequence ID" value="NC_007492.2"/>
</dbReference>
<dbReference type="SMR" id="Q3KCC1"/>
<dbReference type="KEGG" id="pfo:Pfl01_2843"/>
<dbReference type="eggNOG" id="COG0223">
    <property type="taxonomic scope" value="Bacteria"/>
</dbReference>
<dbReference type="eggNOG" id="COG0451">
    <property type="taxonomic scope" value="Bacteria"/>
</dbReference>
<dbReference type="HOGENOM" id="CLU_007383_23_2_6"/>
<dbReference type="UniPathway" id="UPA00030"/>
<dbReference type="UniPathway" id="UPA00032">
    <property type="reaction ID" value="UER00492"/>
</dbReference>
<dbReference type="UniPathway" id="UPA00032">
    <property type="reaction ID" value="UER00494"/>
</dbReference>
<dbReference type="Proteomes" id="UP000002704">
    <property type="component" value="Chromosome"/>
</dbReference>
<dbReference type="GO" id="GO:0016020">
    <property type="term" value="C:membrane"/>
    <property type="evidence" value="ECO:0007669"/>
    <property type="project" value="GOC"/>
</dbReference>
<dbReference type="GO" id="GO:0016831">
    <property type="term" value="F:carboxy-lyase activity"/>
    <property type="evidence" value="ECO:0007669"/>
    <property type="project" value="InterPro"/>
</dbReference>
<dbReference type="GO" id="GO:0099619">
    <property type="term" value="F:UDP-4-amino-4-deoxy-L-arabinose formyltransferase activity"/>
    <property type="evidence" value="ECO:0007669"/>
    <property type="project" value="UniProtKB-EC"/>
</dbReference>
<dbReference type="GO" id="GO:0099618">
    <property type="term" value="F:UDP-glucuronate dehydrogenase activity"/>
    <property type="evidence" value="ECO:0007669"/>
    <property type="project" value="UniProtKB-EC"/>
</dbReference>
<dbReference type="GO" id="GO:0009245">
    <property type="term" value="P:lipid A biosynthetic process"/>
    <property type="evidence" value="ECO:0007669"/>
    <property type="project" value="UniProtKB-KW"/>
</dbReference>
<dbReference type="GO" id="GO:0009103">
    <property type="term" value="P:lipopolysaccharide biosynthetic process"/>
    <property type="evidence" value="ECO:0007669"/>
    <property type="project" value="UniProtKB-UniRule"/>
</dbReference>
<dbReference type="GO" id="GO:0046677">
    <property type="term" value="P:response to antibiotic"/>
    <property type="evidence" value="ECO:0007669"/>
    <property type="project" value="UniProtKB-KW"/>
</dbReference>
<dbReference type="CDD" id="cd08702">
    <property type="entry name" value="Arna_FMT_C"/>
    <property type="match status" value="1"/>
</dbReference>
<dbReference type="CDD" id="cd05257">
    <property type="entry name" value="Arna_like_SDR_e"/>
    <property type="match status" value="1"/>
</dbReference>
<dbReference type="FunFam" id="3.40.50.720:FF:000197">
    <property type="entry name" value="Bifunctional polymyxin resistance protein ArnA"/>
    <property type="match status" value="1"/>
</dbReference>
<dbReference type="Gene3D" id="3.40.50.12230">
    <property type="match status" value="1"/>
</dbReference>
<dbReference type="Gene3D" id="3.40.50.720">
    <property type="entry name" value="NAD(P)-binding Rossmann-like Domain"/>
    <property type="match status" value="1"/>
</dbReference>
<dbReference type="HAMAP" id="MF_01166">
    <property type="entry name" value="ArnA"/>
    <property type="match status" value="1"/>
</dbReference>
<dbReference type="InterPro" id="IPR045869">
    <property type="entry name" value="Arna-like_SDR_e"/>
</dbReference>
<dbReference type="InterPro" id="IPR021168">
    <property type="entry name" value="Bifun_polymyxin_resist_ArnA"/>
</dbReference>
<dbReference type="InterPro" id="IPR001509">
    <property type="entry name" value="Epimerase_deHydtase"/>
</dbReference>
<dbReference type="InterPro" id="IPR005793">
    <property type="entry name" value="Formyl_trans_C"/>
</dbReference>
<dbReference type="InterPro" id="IPR002376">
    <property type="entry name" value="Formyl_transf_N"/>
</dbReference>
<dbReference type="InterPro" id="IPR036477">
    <property type="entry name" value="Formyl_transf_N_sf"/>
</dbReference>
<dbReference type="InterPro" id="IPR011034">
    <property type="entry name" value="Formyl_transferase-like_C_sf"/>
</dbReference>
<dbReference type="InterPro" id="IPR050177">
    <property type="entry name" value="Lipid_A_modif_metabolic_enz"/>
</dbReference>
<dbReference type="InterPro" id="IPR036291">
    <property type="entry name" value="NAD(P)-bd_dom_sf"/>
</dbReference>
<dbReference type="NCBIfam" id="NF005414">
    <property type="entry name" value="PRK06988.1"/>
    <property type="match status" value="1"/>
</dbReference>
<dbReference type="NCBIfam" id="NF005998">
    <property type="entry name" value="PRK08125.1"/>
    <property type="match status" value="1"/>
</dbReference>
<dbReference type="NCBIfam" id="NF008872">
    <property type="entry name" value="PRK11908.1"/>
    <property type="match status" value="1"/>
</dbReference>
<dbReference type="PANTHER" id="PTHR43245">
    <property type="entry name" value="BIFUNCTIONAL POLYMYXIN RESISTANCE PROTEIN ARNA"/>
    <property type="match status" value="1"/>
</dbReference>
<dbReference type="PANTHER" id="PTHR43245:SF13">
    <property type="entry name" value="UDP-D-APIOSE_UDP-D-XYLOSE SYNTHASE 2"/>
    <property type="match status" value="1"/>
</dbReference>
<dbReference type="Pfam" id="PF01370">
    <property type="entry name" value="Epimerase"/>
    <property type="match status" value="1"/>
</dbReference>
<dbReference type="Pfam" id="PF02911">
    <property type="entry name" value="Formyl_trans_C"/>
    <property type="match status" value="1"/>
</dbReference>
<dbReference type="Pfam" id="PF00551">
    <property type="entry name" value="Formyl_trans_N"/>
    <property type="match status" value="1"/>
</dbReference>
<dbReference type="PIRSF" id="PIRSF036506">
    <property type="entry name" value="Bifun_polymyxin_resist_ArnA"/>
    <property type="match status" value="1"/>
</dbReference>
<dbReference type="SUPFAM" id="SSF50486">
    <property type="entry name" value="FMT C-terminal domain-like"/>
    <property type="match status" value="1"/>
</dbReference>
<dbReference type="SUPFAM" id="SSF53328">
    <property type="entry name" value="Formyltransferase"/>
    <property type="match status" value="1"/>
</dbReference>
<dbReference type="SUPFAM" id="SSF51735">
    <property type="entry name" value="NAD(P)-binding Rossmann-fold domains"/>
    <property type="match status" value="1"/>
</dbReference>
<reference key="1">
    <citation type="journal article" date="2009" name="Genome Biol.">
        <title>Genomic and genetic analyses of diversity and plant interactions of Pseudomonas fluorescens.</title>
        <authorList>
            <person name="Silby M.W."/>
            <person name="Cerdeno-Tarraga A.M."/>
            <person name="Vernikos G.S."/>
            <person name="Giddens S.R."/>
            <person name="Jackson R.W."/>
            <person name="Preston G.M."/>
            <person name="Zhang X.-X."/>
            <person name="Moon C.D."/>
            <person name="Gehrig S.M."/>
            <person name="Godfrey S.A.C."/>
            <person name="Knight C.G."/>
            <person name="Malone J.G."/>
            <person name="Robinson Z."/>
            <person name="Spiers A.J."/>
            <person name="Harris S."/>
            <person name="Challis G.L."/>
            <person name="Yaxley A.M."/>
            <person name="Harris D."/>
            <person name="Seeger K."/>
            <person name="Murphy L."/>
            <person name="Rutter S."/>
            <person name="Squares R."/>
            <person name="Quail M.A."/>
            <person name="Saunders E."/>
            <person name="Mavromatis K."/>
            <person name="Brettin T.S."/>
            <person name="Bentley S.D."/>
            <person name="Hothersall J."/>
            <person name="Stephens E."/>
            <person name="Thomas C.M."/>
            <person name="Parkhill J."/>
            <person name="Levy S.B."/>
            <person name="Rainey P.B."/>
            <person name="Thomson N.R."/>
        </authorList>
    </citation>
    <scope>NUCLEOTIDE SEQUENCE [LARGE SCALE GENOMIC DNA]</scope>
    <source>
        <strain>Pf0-1</strain>
    </source>
</reference>
<keyword id="KW-0046">Antibiotic resistance</keyword>
<keyword id="KW-0441">Lipid A biosynthesis</keyword>
<keyword id="KW-0444">Lipid biosynthesis</keyword>
<keyword id="KW-0443">Lipid metabolism</keyword>
<keyword id="KW-0448">Lipopolysaccharide biosynthesis</keyword>
<keyword id="KW-0511">Multifunctional enzyme</keyword>
<keyword id="KW-0520">NAD</keyword>
<keyword id="KW-0560">Oxidoreductase</keyword>
<keyword id="KW-0808">Transferase</keyword>
<organism>
    <name type="scientific">Pseudomonas fluorescens (strain Pf0-1)</name>
    <dbReference type="NCBI Taxonomy" id="205922"/>
    <lineage>
        <taxon>Bacteria</taxon>
        <taxon>Pseudomonadati</taxon>
        <taxon>Pseudomonadota</taxon>
        <taxon>Gammaproteobacteria</taxon>
        <taxon>Pseudomonadales</taxon>
        <taxon>Pseudomonadaceae</taxon>
        <taxon>Pseudomonas</taxon>
    </lineage>
</organism>
<gene>
    <name evidence="1" type="primary">arnA</name>
    <name type="ordered locus">Pfl01_2843</name>
</gene>
<evidence type="ECO:0000255" key="1">
    <source>
        <dbReference type="HAMAP-Rule" id="MF_01166"/>
    </source>
</evidence>
<proteinExistence type="inferred from homology"/>
<comment type="function">
    <text evidence="1">Bifunctional enzyme that catalyzes the oxidative decarboxylation of UDP-glucuronic acid (UDP-GlcUA) to UDP-4-keto-arabinose (UDP-Ara4O) and the addition of a formyl group to UDP-4-amino-4-deoxy-L-arabinose (UDP-L-Ara4N) to form UDP-L-4-formamido-arabinose (UDP-L-Ara4FN). The modified arabinose is attached to lipid A and is required for resistance to polymyxin and cationic antimicrobial peptides.</text>
</comment>
<comment type="catalytic activity">
    <reaction evidence="1">
        <text>UDP-alpha-D-glucuronate + NAD(+) = UDP-beta-L-threo-pentopyranos-4-ulose + CO2 + NADH</text>
        <dbReference type="Rhea" id="RHEA:24702"/>
        <dbReference type="ChEBI" id="CHEBI:16526"/>
        <dbReference type="ChEBI" id="CHEBI:57540"/>
        <dbReference type="ChEBI" id="CHEBI:57945"/>
        <dbReference type="ChEBI" id="CHEBI:58052"/>
        <dbReference type="ChEBI" id="CHEBI:58710"/>
        <dbReference type="EC" id="1.1.1.305"/>
    </reaction>
</comment>
<comment type="catalytic activity">
    <reaction evidence="1">
        <text>UDP-4-amino-4-deoxy-beta-L-arabinose + (6R)-10-formyltetrahydrofolate = UDP-4-deoxy-4-formamido-beta-L-arabinose + (6S)-5,6,7,8-tetrahydrofolate + H(+)</text>
        <dbReference type="Rhea" id="RHEA:24706"/>
        <dbReference type="ChEBI" id="CHEBI:15378"/>
        <dbReference type="ChEBI" id="CHEBI:57453"/>
        <dbReference type="ChEBI" id="CHEBI:58708"/>
        <dbReference type="ChEBI" id="CHEBI:58709"/>
        <dbReference type="ChEBI" id="CHEBI:195366"/>
        <dbReference type="EC" id="2.1.2.13"/>
    </reaction>
</comment>
<comment type="pathway">
    <text evidence="1">Nucleotide-sugar biosynthesis; UDP-4-deoxy-4-formamido-beta-L-arabinose biosynthesis; UDP-4-deoxy-4-formamido-beta-L-arabinose from UDP-alpha-D-glucuronate: step 1/3.</text>
</comment>
<comment type="pathway">
    <text evidence="1">Nucleotide-sugar biosynthesis; UDP-4-deoxy-4-formamido-beta-L-arabinose biosynthesis; UDP-4-deoxy-4-formamido-beta-L-arabinose from UDP-alpha-D-glucuronate: step 3/3.</text>
</comment>
<comment type="pathway">
    <text evidence="1">Bacterial outer membrane biogenesis; lipopolysaccharide biosynthesis.</text>
</comment>
<comment type="subunit">
    <text evidence="1">Homohexamer, formed by a dimer of trimers.</text>
</comment>
<comment type="similarity">
    <text evidence="1">In the N-terminal section; belongs to the Fmt family. UDP-L-Ara4N formyltransferase subfamily.</text>
</comment>
<comment type="similarity">
    <text evidence="1">In the C-terminal section; belongs to the NAD(P)-dependent epimerase/dehydratase family. UDP-glucuronic acid decarboxylase subfamily.</text>
</comment>
<feature type="chain" id="PRO_0000281726" description="Bifunctional polymyxin resistance protein ArnA">
    <location>
        <begin position="1"/>
        <end position="668"/>
    </location>
</feature>
<feature type="region of interest" description="Formyltransferase ArnAFT">
    <location>
        <begin position="1"/>
        <end position="307"/>
    </location>
</feature>
<feature type="region of interest" description="Dehydrogenase ArnADH">
    <location>
        <begin position="317"/>
        <end position="668"/>
    </location>
</feature>
<feature type="active site" description="Proton donor; for formyltransferase activity" evidence="1">
    <location>
        <position position="106"/>
    </location>
</feature>
<feature type="active site" description="Proton acceptor; for decarboxylase activity" evidence="1">
    <location>
        <position position="437"/>
    </location>
</feature>
<feature type="active site" description="Proton donor; for decarboxylase activity" evidence="1">
    <location>
        <position position="621"/>
    </location>
</feature>
<feature type="binding site" evidence="1">
    <location>
        <position position="116"/>
    </location>
    <ligand>
        <name>(6R)-10-formyltetrahydrofolate</name>
        <dbReference type="ChEBI" id="CHEBI:195366"/>
    </ligand>
</feature>
<feature type="binding site" evidence="1">
    <location>
        <begin position="138"/>
        <end position="142"/>
    </location>
    <ligand>
        <name>(6R)-10-formyltetrahydrofolate</name>
        <dbReference type="ChEBI" id="CHEBI:195366"/>
    </ligand>
</feature>
<feature type="binding site" evidence="1">
    <location>
        <position position="350"/>
    </location>
    <ligand>
        <name>NAD(+)</name>
        <dbReference type="ChEBI" id="CHEBI:57540"/>
    </ligand>
</feature>
<feature type="binding site" evidence="1">
    <location>
        <begin position="371"/>
        <end position="372"/>
    </location>
    <ligand>
        <name>NAD(+)</name>
        <dbReference type="ChEBI" id="CHEBI:57540"/>
    </ligand>
</feature>
<feature type="binding site" evidence="1">
    <location>
        <position position="396"/>
    </location>
    <ligand>
        <name>UDP-alpha-D-glucuronate</name>
        <dbReference type="ChEBI" id="CHEBI:58052"/>
    </ligand>
</feature>
<feature type="binding site" evidence="1">
    <location>
        <position position="401"/>
    </location>
    <ligand>
        <name>UDP-alpha-D-glucuronate</name>
        <dbReference type="ChEBI" id="CHEBI:58052"/>
    </ligand>
</feature>
<feature type="binding site" evidence="1">
    <location>
        <begin position="435"/>
        <end position="436"/>
    </location>
    <ligand>
        <name>UDP-alpha-D-glucuronate</name>
        <dbReference type="ChEBI" id="CHEBI:58052"/>
    </ligand>
</feature>
<feature type="binding site" evidence="1">
    <location>
        <position position="463"/>
    </location>
    <ligand>
        <name>UDP-alpha-D-glucuronate</name>
        <dbReference type="ChEBI" id="CHEBI:58052"/>
    </ligand>
</feature>
<feature type="binding site" evidence="1">
    <location>
        <position position="494"/>
    </location>
    <ligand>
        <name>UDP-alpha-D-glucuronate</name>
        <dbReference type="ChEBI" id="CHEBI:58052"/>
    </ligand>
</feature>
<feature type="binding site" evidence="1">
    <location>
        <begin position="528"/>
        <end position="537"/>
    </location>
    <ligand>
        <name>UDP-alpha-D-glucuronate</name>
        <dbReference type="ChEBI" id="CHEBI:58052"/>
    </ligand>
</feature>
<feature type="binding site" evidence="1">
    <location>
        <position position="615"/>
    </location>
    <ligand>
        <name>UDP-alpha-D-glucuronate</name>
        <dbReference type="ChEBI" id="CHEBI:58052"/>
    </ligand>
</feature>
<feature type="site" description="Transition state stabilizer" evidence="1">
    <location>
        <position position="104"/>
    </location>
</feature>
<feature type="site" description="Raises pKa of active site His" evidence="1">
    <location>
        <position position="142"/>
    </location>
</feature>
<sequence>MSAKTVVFAYHDIGCAGIQALLDSGYDIAAVFTHAHDPKENTFYASVAQLCANNGIAVHAPEDANHPLWIERIAKLDPDYIFSFYYRNLLSEPLLALAKKGAFNLHGSLLPRYRGRAPANWVLVNGETETGVTLHRMVKRADAGAIVAQQRVAIERSDTALSLHGKLRTAASDLLRDALPAMLQGRITETPQDESKATVFGRRTPADGKLVWAQPAEKLFNLVRAVTQPYPGAFCAVGEHKLIVWSAEVVKGNEGQAPGRVISVDPLRIACGEDSLVINAGQRNDNGLYLSGPQLANELGLVDGSLLRGAESGRGPRRTRVLILGVNGFIGNHLSERLLRDERYEVYGLDIGSDAIDRLRSHPRFHFVEGDISIHSEWIEYHIKKCDVVLPLVAIATPIEYTRNPLRVFELDFEENLKLVRYCVKYNKRVIFPSTSEVYGMCQDKHFDEDRSNLIVGPINKQRWIYSVSKQLLDRVIWAYGAKGLNFTLFRPFNWMGPRLDRLDSARIGSSRAITQLILNLVEGTPIRLFDGGEQKRCFTDIADGVEALARIIDNDNDVCNGQIINIGNPDNEASIRQLGEELLRQFEAHPLRSNFPPFAGFRDVESKAFYGAGYQDVEHRKPSIANAKRLLDWTPTVEMRETIGNTLDFFLREAMLEIERPSNKEAC</sequence>
<name>ARNA_PSEPF</name>
<protein>
    <recommendedName>
        <fullName evidence="1">Bifunctional polymyxin resistance protein ArnA</fullName>
    </recommendedName>
    <domain>
        <recommendedName>
            <fullName evidence="1">UDP-4-amino-4-deoxy-L-arabinose formyltransferase</fullName>
            <ecNumber evidence="1">2.1.2.13</ecNumber>
        </recommendedName>
        <alternativeName>
            <fullName evidence="1">ArnAFT</fullName>
        </alternativeName>
        <alternativeName>
            <fullName evidence="1">UDP-L-Ara4N formyltransferase</fullName>
        </alternativeName>
    </domain>
    <domain>
        <recommendedName>
            <fullName evidence="1">UDP-glucuronic acid oxidase, UDP-4-keto-hexauronic acid decarboxylating</fullName>
            <ecNumber evidence="1">1.1.1.305</ecNumber>
        </recommendedName>
        <alternativeName>
            <fullName evidence="1">ArnADH</fullName>
        </alternativeName>
        <alternativeName>
            <fullName evidence="1">UDP-GlcUA decarboxylase</fullName>
        </alternativeName>
        <alternativeName>
            <fullName evidence="1">UDP-glucuronic acid dehydrogenase</fullName>
        </alternativeName>
    </domain>
</protein>
<accession>Q3KCC1</accession>